<feature type="chain" id="PRO_0000368165" description="Intermediate capsid protein VP6">
    <location>
        <begin position="1"/>
        <end position="397"/>
    </location>
</feature>
<feature type="region of interest" description="Interaction with the inner capsid protein VP2" evidence="1">
    <location>
        <begin position="62"/>
        <end position="73"/>
    </location>
</feature>
<feature type="binding site" evidence="1">
    <location>
        <position position="153"/>
    </location>
    <ligand>
        <name>Zn(2+)</name>
        <dbReference type="ChEBI" id="CHEBI:29105"/>
        <note>ligand shared between all trimeric partners</note>
    </ligand>
</feature>
<feature type="binding site" evidence="1">
    <location>
        <position position="266"/>
    </location>
    <ligand>
        <name>Ca(2+)</name>
        <dbReference type="ChEBI" id="CHEBI:29108"/>
    </ligand>
</feature>
<feature type="binding site" evidence="1">
    <location>
        <position position="286"/>
    </location>
    <ligand>
        <name>Ca(2+)</name>
        <dbReference type="ChEBI" id="CHEBI:29108"/>
    </ligand>
</feature>
<accession>P87723</accession>
<reference key="1">
    <citation type="journal article" date="1997" name="Virus Genes">
        <title>Sequence analysis demonstrates that VP6, NSP1 and NSP4 genes of Indian neonatal rotavirus strain 116E are of human origin.</title>
        <authorList>
            <person name="Cunliffe N.A."/>
            <person name="Das B.K."/>
            <person name="Ramachandran M."/>
            <person name="Bhan M.K."/>
            <person name="Glass R.I."/>
            <person name="Gentsch J.R."/>
        </authorList>
    </citation>
    <scope>NUCLEOTIDE SEQUENCE [MRNA]</scope>
</reference>
<organism>
    <name type="scientific">Rotavirus A (isolate RVA/Human/India/116E/1986/G9P8[11])</name>
    <name type="common">RV-A</name>
    <dbReference type="NCBI Taxonomy" id="638299"/>
    <lineage>
        <taxon>Viruses</taxon>
        <taxon>Riboviria</taxon>
        <taxon>Orthornavirae</taxon>
        <taxon>Duplornaviricota</taxon>
        <taxon>Resentoviricetes</taxon>
        <taxon>Reovirales</taxon>
        <taxon>Sedoreoviridae</taxon>
        <taxon>Rotavirus</taxon>
        <taxon>Rotavirus A</taxon>
    </lineage>
</organism>
<dbReference type="EMBL" id="U85998">
    <property type="protein sequence ID" value="AAB46985.1"/>
    <property type="molecule type" value="mRNA"/>
</dbReference>
<dbReference type="SMR" id="P87723"/>
<dbReference type="GO" id="GO:0019031">
    <property type="term" value="C:viral envelope"/>
    <property type="evidence" value="ECO:0007669"/>
    <property type="project" value="UniProtKB-UniRule"/>
</dbReference>
<dbReference type="GO" id="GO:0039626">
    <property type="term" value="C:viral intermediate capsid"/>
    <property type="evidence" value="ECO:0007669"/>
    <property type="project" value="UniProtKB-UniRule"/>
</dbReference>
<dbReference type="GO" id="GO:0046789">
    <property type="term" value="F:host cell surface receptor binding"/>
    <property type="evidence" value="ECO:0007669"/>
    <property type="project" value="UniProtKB-UniRule"/>
</dbReference>
<dbReference type="GO" id="GO:0046872">
    <property type="term" value="F:metal ion binding"/>
    <property type="evidence" value="ECO:0007669"/>
    <property type="project" value="UniProtKB-UniRule"/>
</dbReference>
<dbReference type="GO" id="GO:0005198">
    <property type="term" value="F:structural molecule activity"/>
    <property type="evidence" value="ECO:0007669"/>
    <property type="project" value="UniProtKB-UniRule"/>
</dbReference>
<dbReference type="GO" id="GO:0019064">
    <property type="term" value="P:fusion of virus membrane with host plasma membrane"/>
    <property type="evidence" value="ECO:0007669"/>
    <property type="project" value="UniProtKB-UniRule"/>
</dbReference>
<dbReference type="FunFam" id="2.60.120.170:FF:000001">
    <property type="entry name" value="Intermediate capsid protein VP6"/>
    <property type="match status" value="1"/>
</dbReference>
<dbReference type="Gene3D" id="2.60.120.170">
    <property type="match status" value="1"/>
</dbReference>
<dbReference type="Gene3D" id="1.10.1350.10">
    <property type="entry name" value="Viral capsid alpha domain"/>
    <property type="match status" value="1"/>
</dbReference>
<dbReference type="HAMAP" id="MF_04126">
    <property type="entry name" value="Rota_VP6"/>
    <property type="match status" value="1"/>
</dbReference>
<dbReference type="HAMAP" id="MF_04129">
    <property type="entry name" value="Rota_VP6_A"/>
    <property type="match status" value="1"/>
</dbReference>
<dbReference type="InterPro" id="IPR008980">
    <property type="entry name" value="Capsid_hemagglutn"/>
</dbReference>
<dbReference type="InterPro" id="IPR001385">
    <property type="entry name" value="Rotavirus_A/C_VP6"/>
</dbReference>
<dbReference type="InterPro" id="IPR008935">
    <property type="entry name" value="Virus_capsid_a-hlx_vir"/>
</dbReference>
<dbReference type="Pfam" id="PF00980">
    <property type="entry name" value="Rota_Capsid_VP6"/>
    <property type="match status" value="1"/>
</dbReference>
<dbReference type="SUPFAM" id="SSF48345">
    <property type="entry name" value="A virus capsid protein alpha-helical domain"/>
    <property type="match status" value="1"/>
</dbReference>
<dbReference type="SUPFAM" id="SSF49818">
    <property type="entry name" value="Viral protein domain"/>
    <property type="match status" value="1"/>
</dbReference>
<proteinExistence type="evidence at transcript level"/>
<protein>
    <recommendedName>
        <fullName evidence="1">Intermediate capsid protein VP6</fullName>
    </recommendedName>
</protein>
<comment type="function">
    <text evidence="1">Intermediate capsid protein that self assembles to form an icosahedral capsid with a T=13 symmetry, which consists of 230 trimers of VP6, with channels at each of its five-fold vertices. This capsid constitutes the middle concentric layer of the viral mature particle. The innermost VP2 capsid and the intermediate VP6 capsid remain intact following cell entry to protect the dsRNA from degradation and to prevent unfavorable antiviral responses in the host cell during all the replication cycle of the virus. Nascent transcripts are transcribed within the structural confines of this double-layered particle (DLP) and are extruded through the channels at the five-fold axes. VP6 is required for the transcription activity of the DLP.</text>
</comment>
<comment type="subunit">
    <text evidence="1">Homotrimer. Interacts with the inner capsid protein VP2. Interacts with the outer capsid glycoprotein VP7. Interacts with the outer capsid protein VP5*.</text>
</comment>
<comment type="subcellular location">
    <subcellularLocation>
        <location evidence="1">Virion</location>
    </subcellularLocation>
    <text evidence="1">Component of the intermediate capsid. Also found in spherical cytoplasmic structures, called virus factories, that appear early after infection and are the site of viral replication and packaging.</text>
</comment>
<comment type="PTM">
    <text evidence="1">The N-terminus is blocked.</text>
</comment>
<comment type="PTM">
    <text evidence="1">Sumoylated with SUMO1 and SUMO2. Sumoylation of viral proteins seems to have a positive role on viral replication.</text>
</comment>
<comment type="miscellaneous">
    <text evidence="1">The VP6 trimer contains a zinc ion located at the center of the molecule. The zinc ion is not essential for either trimerization or transcription activity of the DLP. Zinc-depleted VP6 has an increased sensitivity to proteases.</text>
</comment>
<comment type="similarity">
    <text evidence="1">Belongs to the rotavirus VP6 family.</text>
</comment>
<name>VP6_ROTHU</name>
<keyword id="KW-0106">Calcium</keyword>
<keyword id="KW-0167">Capsid protein</keyword>
<keyword id="KW-1154">Intermediate capsid protein</keyword>
<keyword id="KW-0479">Metal-binding</keyword>
<keyword id="KW-0832">Ubl conjugation</keyword>
<keyword id="KW-0946">Virion</keyword>
<keyword id="KW-0862">Zinc</keyword>
<sequence length="397" mass="44906">MEVLYSLSKTLKDARDKIVEGTLYSNVSDLIQQFNQMIVTMNGNDFQTGGIGNLPIRNWTFDFGLLGTTLLNLDANYVENARTTIEYFIDFIDNVCIDEMSRESQRNGVAPQSEALRKLAGIKFKRINFNNSSEYIENWNLQNRRQRTGFVFHKPNIFPYSASFTLNRSQPMHDNLMGTMWLNAGSEIQVAGFDYSCAINAPANIQQFEHIVQLRRALTTATITLLPDAERFSFPRVINSADGATTWLFNPVILRPNNVEVEFLLNGQIINTYQARFGTIIARNFDTIRLSFQLMRPPNMTPAVNALFPQAQPFQHHATVGLTLRIESAVCESVLADANETLLANVTAVRQEYAIPVGPVFPPGMNWTELITNYSPSREDNLQRVFTVASIRSMLIK</sequence>
<organismHost>
    <name type="scientific">Homo sapiens</name>
    <name type="common">Human</name>
    <dbReference type="NCBI Taxonomy" id="9606"/>
</organismHost>
<evidence type="ECO:0000255" key="1">
    <source>
        <dbReference type="HAMAP-Rule" id="MF_04129"/>
    </source>
</evidence>